<accession>Q0SFB4</accession>
<gene>
    <name evidence="1" type="primary">rpoC</name>
    <name type="ordered locus">RHA1_ro01961</name>
</gene>
<reference key="1">
    <citation type="journal article" date="2006" name="Proc. Natl. Acad. Sci. U.S.A.">
        <title>The complete genome of Rhodococcus sp. RHA1 provides insights into a catabolic powerhouse.</title>
        <authorList>
            <person name="McLeod M.P."/>
            <person name="Warren R.L."/>
            <person name="Hsiao W.W.L."/>
            <person name="Araki N."/>
            <person name="Myhre M."/>
            <person name="Fernandes C."/>
            <person name="Miyazawa D."/>
            <person name="Wong W."/>
            <person name="Lillquist A.L."/>
            <person name="Wang D."/>
            <person name="Dosanjh M."/>
            <person name="Hara H."/>
            <person name="Petrescu A."/>
            <person name="Morin R.D."/>
            <person name="Yang G."/>
            <person name="Stott J.M."/>
            <person name="Schein J.E."/>
            <person name="Shin H."/>
            <person name="Smailus D."/>
            <person name="Siddiqui A.S."/>
            <person name="Marra M.A."/>
            <person name="Jones S.J.M."/>
            <person name="Holt R."/>
            <person name="Brinkman F.S.L."/>
            <person name="Miyauchi K."/>
            <person name="Fukuda M."/>
            <person name="Davies J.E."/>
            <person name="Mohn W.W."/>
            <person name="Eltis L.D."/>
        </authorList>
    </citation>
    <scope>NUCLEOTIDE SEQUENCE [LARGE SCALE GENOMIC DNA]</scope>
    <source>
        <strain>RHA1</strain>
    </source>
</reference>
<dbReference type="EC" id="2.7.7.6" evidence="1"/>
<dbReference type="EMBL" id="CP000431">
    <property type="protein sequence ID" value="ABG93772.1"/>
    <property type="molecule type" value="Genomic_DNA"/>
</dbReference>
<dbReference type="RefSeq" id="WP_009474658.1">
    <property type="nucleotide sequence ID" value="NC_008268.1"/>
</dbReference>
<dbReference type="SMR" id="Q0SFB4"/>
<dbReference type="KEGG" id="rha:RHA1_ro01961"/>
<dbReference type="eggNOG" id="COG0086">
    <property type="taxonomic scope" value="Bacteria"/>
</dbReference>
<dbReference type="HOGENOM" id="CLU_000524_3_1_11"/>
<dbReference type="OrthoDB" id="9815296at2"/>
<dbReference type="Proteomes" id="UP000008710">
    <property type="component" value="Chromosome"/>
</dbReference>
<dbReference type="GO" id="GO:0000428">
    <property type="term" value="C:DNA-directed RNA polymerase complex"/>
    <property type="evidence" value="ECO:0007669"/>
    <property type="project" value="UniProtKB-KW"/>
</dbReference>
<dbReference type="GO" id="GO:0003677">
    <property type="term" value="F:DNA binding"/>
    <property type="evidence" value="ECO:0007669"/>
    <property type="project" value="UniProtKB-UniRule"/>
</dbReference>
<dbReference type="GO" id="GO:0003899">
    <property type="term" value="F:DNA-directed RNA polymerase activity"/>
    <property type="evidence" value="ECO:0007669"/>
    <property type="project" value="UniProtKB-UniRule"/>
</dbReference>
<dbReference type="GO" id="GO:0000287">
    <property type="term" value="F:magnesium ion binding"/>
    <property type="evidence" value="ECO:0007669"/>
    <property type="project" value="UniProtKB-UniRule"/>
</dbReference>
<dbReference type="GO" id="GO:0008270">
    <property type="term" value="F:zinc ion binding"/>
    <property type="evidence" value="ECO:0007669"/>
    <property type="project" value="UniProtKB-UniRule"/>
</dbReference>
<dbReference type="GO" id="GO:0006351">
    <property type="term" value="P:DNA-templated transcription"/>
    <property type="evidence" value="ECO:0007669"/>
    <property type="project" value="UniProtKB-UniRule"/>
</dbReference>
<dbReference type="CDD" id="cd02655">
    <property type="entry name" value="RNAP_beta'_C"/>
    <property type="match status" value="1"/>
</dbReference>
<dbReference type="CDD" id="cd01609">
    <property type="entry name" value="RNAP_beta'_N"/>
    <property type="match status" value="1"/>
</dbReference>
<dbReference type="FunFam" id="1.10.150.390:FF:000002">
    <property type="entry name" value="DNA-directed RNA polymerase subunit beta"/>
    <property type="match status" value="1"/>
</dbReference>
<dbReference type="FunFam" id="1.10.40.90:FF:000001">
    <property type="entry name" value="DNA-directed RNA polymerase subunit beta"/>
    <property type="match status" value="1"/>
</dbReference>
<dbReference type="FunFam" id="4.10.860.120:FF:000001">
    <property type="entry name" value="DNA-directed RNA polymerase subunit beta"/>
    <property type="match status" value="1"/>
</dbReference>
<dbReference type="Gene3D" id="1.10.132.30">
    <property type="match status" value="1"/>
</dbReference>
<dbReference type="Gene3D" id="1.10.150.390">
    <property type="match status" value="1"/>
</dbReference>
<dbReference type="Gene3D" id="1.10.1790.20">
    <property type="match status" value="1"/>
</dbReference>
<dbReference type="Gene3D" id="1.10.40.90">
    <property type="match status" value="1"/>
</dbReference>
<dbReference type="Gene3D" id="2.40.40.20">
    <property type="match status" value="1"/>
</dbReference>
<dbReference type="Gene3D" id="2.40.50.100">
    <property type="match status" value="1"/>
</dbReference>
<dbReference type="Gene3D" id="4.10.860.120">
    <property type="entry name" value="RNA polymerase II, clamp domain"/>
    <property type="match status" value="1"/>
</dbReference>
<dbReference type="Gene3D" id="1.10.274.100">
    <property type="entry name" value="RNA polymerase Rpb1, domain 3"/>
    <property type="match status" value="1"/>
</dbReference>
<dbReference type="HAMAP" id="MF_01322">
    <property type="entry name" value="RNApol_bact_RpoC"/>
    <property type="match status" value="1"/>
</dbReference>
<dbReference type="InterPro" id="IPR045867">
    <property type="entry name" value="DNA-dir_RpoC_beta_prime"/>
</dbReference>
<dbReference type="InterPro" id="IPR012754">
    <property type="entry name" value="DNA-dir_RpoC_beta_prime_bact"/>
</dbReference>
<dbReference type="InterPro" id="IPR000722">
    <property type="entry name" value="RNA_pol_asu"/>
</dbReference>
<dbReference type="InterPro" id="IPR006592">
    <property type="entry name" value="RNA_pol_N"/>
</dbReference>
<dbReference type="InterPro" id="IPR007080">
    <property type="entry name" value="RNA_pol_Rpb1_1"/>
</dbReference>
<dbReference type="InterPro" id="IPR007066">
    <property type="entry name" value="RNA_pol_Rpb1_3"/>
</dbReference>
<dbReference type="InterPro" id="IPR042102">
    <property type="entry name" value="RNA_pol_Rpb1_3_sf"/>
</dbReference>
<dbReference type="InterPro" id="IPR007083">
    <property type="entry name" value="RNA_pol_Rpb1_4"/>
</dbReference>
<dbReference type="InterPro" id="IPR007081">
    <property type="entry name" value="RNA_pol_Rpb1_5"/>
</dbReference>
<dbReference type="InterPro" id="IPR044893">
    <property type="entry name" value="RNA_pol_Rpb1_clamp_domain"/>
</dbReference>
<dbReference type="InterPro" id="IPR038120">
    <property type="entry name" value="Rpb1_funnel_sf"/>
</dbReference>
<dbReference type="NCBIfam" id="NF011498">
    <property type="entry name" value="PRK14906.1"/>
    <property type="match status" value="1"/>
</dbReference>
<dbReference type="NCBIfam" id="TIGR02386">
    <property type="entry name" value="rpoC_TIGR"/>
    <property type="match status" value="1"/>
</dbReference>
<dbReference type="PANTHER" id="PTHR19376">
    <property type="entry name" value="DNA-DIRECTED RNA POLYMERASE"/>
    <property type="match status" value="1"/>
</dbReference>
<dbReference type="PANTHER" id="PTHR19376:SF54">
    <property type="entry name" value="DNA-DIRECTED RNA POLYMERASE SUBUNIT BETA"/>
    <property type="match status" value="1"/>
</dbReference>
<dbReference type="Pfam" id="PF04997">
    <property type="entry name" value="RNA_pol_Rpb1_1"/>
    <property type="match status" value="1"/>
</dbReference>
<dbReference type="Pfam" id="PF00623">
    <property type="entry name" value="RNA_pol_Rpb1_2"/>
    <property type="match status" value="2"/>
</dbReference>
<dbReference type="Pfam" id="PF04983">
    <property type="entry name" value="RNA_pol_Rpb1_3"/>
    <property type="match status" value="1"/>
</dbReference>
<dbReference type="Pfam" id="PF05000">
    <property type="entry name" value="RNA_pol_Rpb1_4"/>
    <property type="match status" value="1"/>
</dbReference>
<dbReference type="Pfam" id="PF04998">
    <property type="entry name" value="RNA_pol_Rpb1_5"/>
    <property type="match status" value="1"/>
</dbReference>
<dbReference type="SMART" id="SM00663">
    <property type="entry name" value="RPOLA_N"/>
    <property type="match status" value="1"/>
</dbReference>
<dbReference type="SUPFAM" id="SSF64484">
    <property type="entry name" value="beta and beta-prime subunits of DNA dependent RNA-polymerase"/>
    <property type="match status" value="1"/>
</dbReference>
<feature type="chain" id="PRO_0000308876" description="DNA-directed RNA polymerase subunit beta'">
    <location>
        <begin position="1"/>
        <end position="1318"/>
    </location>
</feature>
<feature type="binding site" evidence="1">
    <location>
        <position position="60"/>
    </location>
    <ligand>
        <name>Zn(2+)</name>
        <dbReference type="ChEBI" id="CHEBI:29105"/>
        <label>1</label>
    </ligand>
</feature>
<feature type="binding site" evidence="1">
    <location>
        <position position="62"/>
    </location>
    <ligand>
        <name>Zn(2+)</name>
        <dbReference type="ChEBI" id="CHEBI:29105"/>
        <label>1</label>
    </ligand>
</feature>
<feature type="binding site" evidence="1">
    <location>
        <position position="75"/>
    </location>
    <ligand>
        <name>Zn(2+)</name>
        <dbReference type="ChEBI" id="CHEBI:29105"/>
        <label>1</label>
    </ligand>
</feature>
<feature type="binding site" evidence="1">
    <location>
        <position position="78"/>
    </location>
    <ligand>
        <name>Zn(2+)</name>
        <dbReference type="ChEBI" id="CHEBI:29105"/>
        <label>1</label>
    </ligand>
</feature>
<feature type="binding site" evidence="1">
    <location>
        <position position="535"/>
    </location>
    <ligand>
        <name>Mg(2+)</name>
        <dbReference type="ChEBI" id="CHEBI:18420"/>
    </ligand>
</feature>
<feature type="binding site" evidence="1">
    <location>
        <position position="537"/>
    </location>
    <ligand>
        <name>Mg(2+)</name>
        <dbReference type="ChEBI" id="CHEBI:18420"/>
    </ligand>
</feature>
<feature type="binding site" evidence="1">
    <location>
        <position position="539"/>
    </location>
    <ligand>
        <name>Mg(2+)</name>
        <dbReference type="ChEBI" id="CHEBI:18420"/>
    </ligand>
</feature>
<feature type="binding site" evidence="1">
    <location>
        <position position="890"/>
    </location>
    <ligand>
        <name>Zn(2+)</name>
        <dbReference type="ChEBI" id="CHEBI:29105"/>
        <label>2</label>
    </ligand>
</feature>
<feature type="binding site" evidence="1">
    <location>
        <position position="967"/>
    </location>
    <ligand>
        <name>Zn(2+)</name>
        <dbReference type="ChEBI" id="CHEBI:29105"/>
        <label>2</label>
    </ligand>
</feature>
<feature type="binding site" evidence="1">
    <location>
        <position position="974"/>
    </location>
    <ligand>
        <name>Zn(2+)</name>
        <dbReference type="ChEBI" id="CHEBI:29105"/>
        <label>2</label>
    </ligand>
</feature>
<feature type="binding site" evidence="1">
    <location>
        <position position="977"/>
    </location>
    <ligand>
        <name>Zn(2+)</name>
        <dbReference type="ChEBI" id="CHEBI:29105"/>
        <label>2</label>
    </ligand>
</feature>
<protein>
    <recommendedName>
        <fullName evidence="1">DNA-directed RNA polymerase subunit beta'</fullName>
        <shortName evidence="1">RNAP subunit beta'</shortName>
        <ecNumber evidence="1">2.7.7.6</ecNumber>
    </recommendedName>
    <alternativeName>
        <fullName evidence="1">RNA polymerase subunit beta'</fullName>
    </alternativeName>
    <alternativeName>
        <fullName evidence="1">Transcriptase subunit beta'</fullName>
    </alternativeName>
</protein>
<comment type="function">
    <text evidence="1">DNA-dependent RNA polymerase catalyzes the transcription of DNA into RNA using the four ribonucleoside triphosphates as substrates.</text>
</comment>
<comment type="catalytic activity">
    <reaction evidence="1">
        <text>RNA(n) + a ribonucleoside 5'-triphosphate = RNA(n+1) + diphosphate</text>
        <dbReference type="Rhea" id="RHEA:21248"/>
        <dbReference type="Rhea" id="RHEA-COMP:14527"/>
        <dbReference type="Rhea" id="RHEA-COMP:17342"/>
        <dbReference type="ChEBI" id="CHEBI:33019"/>
        <dbReference type="ChEBI" id="CHEBI:61557"/>
        <dbReference type="ChEBI" id="CHEBI:140395"/>
        <dbReference type="EC" id="2.7.7.6"/>
    </reaction>
</comment>
<comment type="cofactor">
    <cofactor evidence="1">
        <name>Mg(2+)</name>
        <dbReference type="ChEBI" id="CHEBI:18420"/>
    </cofactor>
    <text evidence="1">Binds 1 Mg(2+) ion per subunit.</text>
</comment>
<comment type="cofactor">
    <cofactor evidence="1">
        <name>Zn(2+)</name>
        <dbReference type="ChEBI" id="CHEBI:29105"/>
    </cofactor>
    <text evidence="1">Binds 2 Zn(2+) ions per subunit.</text>
</comment>
<comment type="subunit">
    <text evidence="1">The RNAP catalytic core consists of 2 alpha, 1 beta, 1 beta' and 1 omega subunit. When a sigma factor is associated with the core the holoenzyme is formed, which can initiate transcription.</text>
</comment>
<comment type="similarity">
    <text evidence="1">Belongs to the RNA polymerase beta' chain family.</text>
</comment>
<proteinExistence type="inferred from homology"/>
<sequence length="1318" mass="146371">MLDVNFFDELRIGLASAEDIRNWSYGEVKKPETINYRTLKPEKDGLFCEKIFGPTRDWECYCGKYKRVRFKGIICERCGVEVTRAKVRRERMGHIELAAPVTHIWYFKGVPSRLGYLLDLAPKDLEKIIYFAAYVIVGVDEELRHNELSTLEAEMQVEKKSVADQRDADLEARAQKLEADIAELEAEGAKSDVRRKVKDGGEREMRQLRDRAQRELDRLDEIWTTFTKLSVKQLIVDELLYRELVDRYGEYFTGAMGAESIQKLMENFDIDAEAENLRETIRSGKGQKKLRALKRLKVVAAFQTNQNSPMGMVLNAVPVIPPELRPMVQLDGGRFATSDLNDLYRRVINRNNRLKRLIDLGAPEIIVNNEKRMLQESVDALFDNGRRGRPVTGPGNRPLKSLSDLLKGKQGRFRQNLLGKRVDYSGRSVIVVGPQLKLHQCGLPKLMALELFKPFVMKRLVDLNHAQNIKSAKRMVERQRAQVWDVLEEVIAEHPVLLNRAPTLHRLGIQAFEPQLVEGKAIQLHPLVCEAFNADFDGDQMAVHLPLSAEAQAEARILMLSSNNILSPASGRPLAMPRLDMVTGLYHLTRLDEGAIGELAASTSDEAEQGVYSSPAEAQMAVDRGALVVQAKIKVRLTQQRPPRDIESELFPEGWNYGDGWTAETTLGRVLFNELLPADYPFVNEQMPKKRQATIINDLAERYPMIVVAQTVDKLKDAGFYWATRSGVTVSISDVLVPPEKAQIMESFEAQADQIEKKYQRGALNKTERNSALVKIWSEATDEVGKAMEAHFPDDNPIPMIVKSGAAGNMTQVRSLAGMKGLVTNPKGEFIPRPIKSSFKEGLTVLEYFINTHGARKGLADTALRTADSGYLTRRLVDVSQDVIVREVDCGTERGIVTTIAEKQADGTLIRDAHVETSTYARTLAADAVDENGNVIVERGHDLGDPAIDALLEAGITQVKVRSVLTCTTGTGVCATCYGRSMATGKLVDIGEAVGIVAAQSIGEPGTQLTMRTFHQGGVAGDDITGGLPRVQELFEARVPKGKAPIADVSGRVQLEDGDRFYKITIVPDDGGEEVVYDKLSKRQRLRVFKHDDGTERLLADGDHVEVGQQLMEGAADPHEVLRVMGPRQVQIHLVNEVQEVYRSQGVSIHDKHIEVIVRQMLRRVTIIDSGATEFLPGSLTERADFEAANRRVVAEGGEPAAGRPVLMGITKASLATDSWLSAASFQETTRVLTDAAINCRSDKLIGLKENVIIGKLIPAGTGINRYRNIQVQPTEEARAAAYAVPSYDDQYYSPDGFGQNTGAAVPLDDYGFSNDYR</sequence>
<organism>
    <name type="scientific">Rhodococcus jostii (strain RHA1)</name>
    <dbReference type="NCBI Taxonomy" id="101510"/>
    <lineage>
        <taxon>Bacteria</taxon>
        <taxon>Bacillati</taxon>
        <taxon>Actinomycetota</taxon>
        <taxon>Actinomycetes</taxon>
        <taxon>Mycobacteriales</taxon>
        <taxon>Nocardiaceae</taxon>
        <taxon>Rhodococcus</taxon>
    </lineage>
</organism>
<evidence type="ECO:0000255" key="1">
    <source>
        <dbReference type="HAMAP-Rule" id="MF_01322"/>
    </source>
</evidence>
<keyword id="KW-0240">DNA-directed RNA polymerase</keyword>
<keyword id="KW-0460">Magnesium</keyword>
<keyword id="KW-0479">Metal-binding</keyword>
<keyword id="KW-0548">Nucleotidyltransferase</keyword>
<keyword id="KW-0804">Transcription</keyword>
<keyword id="KW-0808">Transferase</keyword>
<keyword id="KW-0862">Zinc</keyword>
<name>RPOC_RHOJR</name>